<name>MURC_BRASO</name>
<comment type="function">
    <text evidence="1">Cell wall formation.</text>
</comment>
<comment type="catalytic activity">
    <reaction evidence="1">
        <text>UDP-N-acetyl-alpha-D-muramate + L-alanine + ATP = UDP-N-acetyl-alpha-D-muramoyl-L-alanine + ADP + phosphate + H(+)</text>
        <dbReference type="Rhea" id="RHEA:23372"/>
        <dbReference type="ChEBI" id="CHEBI:15378"/>
        <dbReference type="ChEBI" id="CHEBI:30616"/>
        <dbReference type="ChEBI" id="CHEBI:43474"/>
        <dbReference type="ChEBI" id="CHEBI:57972"/>
        <dbReference type="ChEBI" id="CHEBI:70757"/>
        <dbReference type="ChEBI" id="CHEBI:83898"/>
        <dbReference type="ChEBI" id="CHEBI:456216"/>
        <dbReference type="EC" id="6.3.2.8"/>
    </reaction>
</comment>
<comment type="pathway">
    <text evidence="1">Cell wall biogenesis; peptidoglycan biosynthesis.</text>
</comment>
<comment type="subcellular location">
    <subcellularLocation>
        <location evidence="1">Cytoplasm</location>
    </subcellularLocation>
</comment>
<comment type="similarity">
    <text evidence="1">Belongs to the MurCDEF family.</text>
</comment>
<dbReference type="EC" id="6.3.2.8" evidence="1"/>
<dbReference type="EMBL" id="CU234118">
    <property type="protein sequence ID" value="CAL79328.1"/>
    <property type="molecule type" value="Genomic_DNA"/>
</dbReference>
<dbReference type="RefSeq" id="WP_012029235.1">
    <property type="nucleotide sequence ID" value="NC_009445.1"/>
</dbReference>
<dbReference type="SMR" id="A4YZK2"/>
<dbReference type="STRING" id="114615.BRADO5658"/>
<dbReference type="KEGG" id="bra:BRADO5658"/>
<dbReference type="eggNOG" id="COG0773">
    <property type="taxonomic scope" value="Bacteria"/>
</dbReference>
<dbReference type="HOGENOM" id="CLU_028104_2_2_5"/>
<dbReference type="OrthoDB" id="9804126at2"/>
<dbReference type="UniPathway" id="UPA00219"/>
<dbReference type="Proteomes" id="UP000001994">
    <property type="component" value="Chromosome"/>
</dbReference>
<dbReference type="GO" id="GO:0005737">
    <property type="term" value="C:cytoplasm"/>
    <property type="evidence" value="ECO:0007669"/>
    <property type="project" value="UniProtKB-SubCell"/>
</dbReference>
<dbReference type="GO" id="GO:0005524">
    <property type="term" value="F:ATP binding"/>
    <property type="evidence" value="ECO:0007669"/>
    <property type="project" value="UniProtKB-UniRule"/>
</dbReference>
<dbReference type="GO" id="GO:0008763">
    <property type="term" value="F:UDP-N-acetylmuramate-L-alanine ligase activity"/>
    <property type="evidence" value="ECO:0007669"/>
    <property type="project" value="UniProtKB-UniRule"/>
</dbReference>
<dbReference type="GO" id="GO:0051301">
    <property type="term" value="P:cell division"/>
    <property type="evidence" value="ECO:0007669"/>
    <property type="project" value="UniProtKB-KW"/>
</dbReference>
<dbReference type="GO" id="GO:0071555">
    <property type="term" value="P:cell wall organization"/>
    <property type="evidence" value="ECO:0007669"/>
    <property type="project" value="UniProtKB-KW"/>
</dbReference>
<dbReference type="GO" id="GO:0009252">
    <property type="term" value="P:peptidoglycan biosynthetic process"/>
    <property type="evidence" value="ECO:0007669"/>
    <property type="project" value="UniProtKB-UniRule"/>
</dbReference>
<dbReference type="GO" id="GO:0008360">
    <property type="term" value="P:regulation of cell shape"/>
    <property type="evidence" value="ECO:0007669"/>
    <property type="project" value="UniProtKB-KW"/>
</dbReference>
<dbReference type="Gene3D" id="3.90.190.20">
    <property type="entry name" value="Mur ligase, C-terminal domain"/>
    <property type="match status" value="1"/>
</dbReference>
<dbReference type="Gene3D" id="3.40.1190.10">
    <property type="entry name" value="Mur-like, catalytic domain"/>
    <property type="match status" value="1"/>
</dbReference>
<dbReference type="Gene3D" id="3.40.50.720">
    <property type="entry name" value="NAD(P)-binding Rossmann-like Domain"/>
    <property type="match status" value="1"/>
</dbReference>
<dbReference type="HAMAP" id="MF_00046">
    <property type="entry name" value="MurC"/>
    <property type="match status" value="1"/>
</dbReference>
<dbReference type="InterPro" id="IPR036565">
    <property type="entry name" value="Mur-like_cat_sf"/>
</dbReference>
<dbReference type="InterPro" id="IPR004101">
    <property type="entry name" value="Mur_ligase_C"/>
</dbReference>
<dbReference type="InterPro" id="IPR036615">
    <property type="entry name" value="Mur_ligase_C_dom_sf"/>
</dbReference>
<dbReference type="InterPro" id="IPR013221">
    <property type="entry name" value="Mur_ligase_cen"/>
</dbReference>
<dbReference type="InterPro" id="IPR000713">
    <property type="entry name" value="Mur_ligase_N"/>
</dbReference>
<dbReference type="InterPro" id="IPR050061">
    <property type="entry name" value="MurCDEF_pg_biosynth"/>
</dbReference>
<dbReference type="InterPro" id="IPR005758">
    <property type="entry name" value="UDP-N-AcMur_Ala_ligase_MurC"/>
</dbReference>
<dbReference type="NCBIfam" id="TIGR01082">
    <property type="entry name" value="murC"/>
    <property type="match status" value="1"/>
</dbReference>
<dbReference type="PANTHER" id="PTHR43445:SF3">
    <property type="entry name" value="UDP-N-ACETYLMURAMATE--L-ALANINE LIGASE"/>
    <property type="match status" value="1"/>
</dbReference>
<dbReference type="PANTHER" id="PTHR43445">
    <property type="entry name" value="UDP-N-ACETYLMURAMATE--L-ALANINE LIGASE-RELATED"/>
    <property type="match status" value="1"/>
</dbReference>
<dbReference type="Pfam" id="PF01225">
    <property type="entry name" value="Mur_ligase"/>
    <property type="match status" value="1"/>
</dbReference>
<dbReference type="Pfam" id="PF02875">
    <property type="entry name" value="Mur_ligase_C"/>
    <property type="match status" value="1"/>
</dbReference>
<dbReference type="Pfam" id="PF08245">
    <property type="entry name" value="Mur_ligase_M"/>
    <property type="match status" value="1"/>
</dbReference>
<dbReference type="SUPFAM" id="SSF51984">
    <property type="entry name" value="MurCD N-terminal domain"/>
    <property type="match status" value="1"/>
</dbReference>
<dbReference type="SUPFAM" id="SSF53623">
    <property type="entry name" value="MurD-like peptide ligases, catalytic domain"/>
    <property type="match status" value="1"/>
</dbReference>
<dbReference type="SUPFAM" id="SSF53244">
    <property type="entry name" value="MurD-like peptide ligases, peptide-binding domain"/>
    <property type="match status" value="1"/>
</dbReference>
<accession>A4YZK2</accession>
<feature type="chain" id="PRO_1000004315" description="UDP-N-acetylmuramate--L-alanine ligase">
    <location>
        <begin position="1"/>
        <end position="467"/>
    </location>
</feature>
<feature type="binding site" evidence="1">
    <location>
        <begin position="114"/>
        <end position="120"/>
    </location>
    <ligand>
        <name>ATP</name>
        <dbReference type="ChEBI" id="CHEBI:30616"/>
    </ligand>
</feature>
<sequence length="467" mass="49702">MRLPREIGPIHFVGIGGIGMSGIAEVLCNLGYTVQGSDASDNANVARLREKGITVSVGHKAENVAGADVVVVSTAIKRDNPELMAARAQRIPVVRRAEMLAELMRLKSCVAIAGTHGKTTTTSMVAALLDAGGLDPTVINGGIINAYGTNARLGGGEWMVVEADESDGTFLKLPADVAIVTNVDPEHLDHFKTFEAVQDAFRAFVENVPFYGFAVMCIDHPVVQALVGKIEDRRIITYGVNPQADVRLVDLTPMGGGSSFKVVFRDRKSGATHEISDIVLPMPGRHNASNATAAIAVARELGLSDEAIRKAIGGFGGVKRRFTRTGEWNGVTVIDDYGHHPVEIAAVLKAARESSNGKVVAVVQPHRYTRLQSLFEEFCTCFNDADAVVVADVYPAGEAPIEGIDRDHFVLGLRAHGHRDVLPLPKAADLAGIVKDLAKPGDLVVCLGAGNITQWAYALPNELKALG</sequence>
<organism>
    <name type="scientific">Bradyrhizobium sp. (strain ORS 278)</name>
    <dbReference type="NCBI Taxonomy" id="114615"/>
    <lineage>
        <taxon>Bacteria</taxon>
        <taxon>Pseudomonadati</taxon>
        <taxon>Pseudomonadota</taxon>
        <taxon>Alphaproteobacteria</taxon>
        <taxon>Hyphomicrobiales</taxon>
        <taxon>Nitrobacteraceae</taxon>
        <taxon>Bradyrhizobium</taxon>
    </lineage>
</organism>
<keyword id="KW-0067">ATP-binding</keyword>
<keyword id="KW-0131">Cell cycle</keyword>
<keyword id="KW-0132">Cell division</keyword>
<keyword id="KW-0133">Cell shape</keyword>
<keyword id="KW-0961">Cell wall biogenesis/degradation</keyword>
<keyword id="KW-0963">Cytoplasm</keyword>
<keyword id="KW-0436">Ligase</keyword>
<keyword id="KW-0547">Nucleotide-binding</keyword>
<keyword id="KW-0573">Peptidoglycan synthesis</keyword>
<keyword id="KW-1185">Reference proteome</keyword>
<evidence type="ECO:0000255" key="1">
    <source>
        <dbReference type="HAMAP-Rule" id="MF_00046"/>
    </source>
</evidence>
<proteinExistence type="inferred from homology"/>
<reference key="1">
    <citation type="journal article" date="2007" name="Science">
        <title>Legumes symbioses: absence of nod genes in photosynthetic bradyrhizobia.</title>
        <authorList>
            <person name="Giraud E."/>
            <person name="Moulin L."/>
            <person name="Vallenet D."/>
            <person name="Barbe V."/>
            <person name="Cytryn E."/>
            <person name="Avarre J.-C."/>
            <person name="Jaubert M."/>
            <person name="Simon D."/>
            <person name="Cartieaux F."/>
            <person name="Prin Y."/>
            <person name="Bena G."/>
            <person name="Hannibal L."/>
            <person name="Fardoux J."/>
            <person name="Kojadinovic M."/>
            <person name="Vuillet L."/>
            <person name="Lajus A."/>
            <person name="Cruveiller S."/>
            <person name="Rouy Z."/>
            <person name="Mangenot S."/>
            <person name="Segurens B."/>
            <person name="Dossat C."/>
            <person name="Franck W.L."/>
            <person name="Chang W.-S."/>
            <person name="Saunders E."/>
            <person name="Bruce D."/>
            <person name="Richardson P."/>
            <person name="Normand P."/>
            <person name="Dreyfus B."/>
            <person name="Pignol D."/>
            <person name="Stacey G."/>
            <person name="Emerich D."/>
            <person name="Vermeglio A."/>
            <person name="Medigue C."/>
            <person name="Sadowsky M."/>
        </authorList>
    </citation>
    <scope>NUCLEOTIDE SEQUENCE [LARGE SCALE GENOMIC DNA]</scope>
    <source>
        <strain>ORS 278</strain>
    </source>
</reference>
<protein>
    <recommendedName>
        <fullName evidence="1">UDP-N-acetylmuramate--L-alanine ligase</fullName>
        <ecNumber evidence="1">6.3.2.8</ecNumber>
    </recommendedName>
    <alternativeName>
        <fullName evidence="1">UDP-N-acetylmuramoyl-L-alanine synthetase</fullName>
    </alternativeName>
</protein>
<gene>
    <name evidence="1" type="primary">murC</name>
    <name type="ordered locus">BRADO5658</name>
</gene>